<keyword id="KW-0067">ATP-binding</keyword>
<keyword id="KW-0997">Cell inner membrane</keyword>
<keyword id="KW-1003">Cell membrane</keyword>
<keyword id="KW-0472">Membrane</keyword>
<keyword id="KW-0547">Nucleotide-binding</keyword>
<keyword id="KW-0592">Phosphate transport</keyword>
<keyword id="KW-1278">Translocase</keyword>
<keyword id="KW-0813">Transport</keyword>
<feature type="chain" id="PRO_0000272472" description="Phosphate import ATP-binding protein PstB 1">
    <location>
        <begin position="1"/>
        <end position="260"/>
    </location>
</feature>
<feature type="domain" description="ABC transporter" evidence="1">
    <location>
        <begin position="13"/>
        <end position="255"/>
    </location>
</feature>
<feature type="binding site" evidence="1">
    <location>
        <begin position="45"/>
        <end position="52"/>
    </location>
    <ligand>
        <name>ATP</name>
        <dbReference type="ChEBI" id="CHEBI:30616"/>
    </ligand>
</feature>
<name>PSTB1_PARM1</name>
<proteinExistence type="inferred from homology"/>
<evidence type="ECO:0000255" key="1">
    <source>
        <dbReference type="HAMAP-Rule" id="MF_01702"/>
    </source>
</evidence>
<gene>
    <name evidence="1" type="primary">pstB1</name>
    <name type="ordered locus">amb1107</name>
</gene>
<organism>
    <name type="scientific">Paramagnetospirillum magneticum (strain ATCC 700264 / AMB-1)</name>
    <name type="common">Magnetospirillum magneticum</name>
    <dbReference type="NCBI Taxonomy" id="342108"/>
    <lineage>
        <taxon>Bacteria</taxon>
        <taxon>Pseudomonadati</taxon>
        <taxon>Pseudomonadota</taxon>
        <taxon>Alphaproteobacteria</taxon>
        <taxon>Rhodospirillales</taxon>
        <taxon>Magnetospirillaceae</taxon>
        <taxon>Paramagnetospirillum</taxon>
    </lineage>
</organism>
<reference key="1">
    <citation type="journal article" date="2005" name="DNA Res.">
        <title>Complete genome sequence of the facultative anaerobic magnetotactic bacterium Magnetospirillum sp. strain AMB-1.</title>
        <authorList>
            <person name="Matsunaga T."/>
            <person name="Okamura Y."/>
            <person name="Fukuda Y."/>
            <person name="Wahyudi A.T."/>
            <person name="Murase Y."/>
            <person name="Takeyama H."/>
        </authorList>
    </citation>
    <scope>NUCLEOTIDE SEQUENCE [LARGE SCALE GENOMIC DNA]</scope>
    <source>
        <strain>ATCC 700264 / AMB-1</strain>
    </source>
</reference>
<protein>
    <recommendedName>
        <fullName evidence="1">Phosphate import ATP-binding protein PstB 1</fullName>
        <ecNumber evidence="1">7.3.2.1</ecNumber>
    </recommendedName>
    <alternativeName>
        <fullName evidence="1">ABC phosphate transporter 1</fullName>
    </alternativeName>
    <alternativeName>
        <fullName evidence="1">Phosphate-transporting ATPase 1</fullName>
    </alternativeName>
</protein>
<dbReference type="EC" id="7.3.2.1" evidence="1"/>
<dbReference type="EMBL" id="AP007255">
    <property type="protein sequence ID" value="BAE49911.1"/>
    <property type="molecule type" value="Genomic_DNA"/>
</dbReference>
<dbReference type="RefSeq" id="WP_011383520.1">
    <property type="nucleotide sequence ID" value="NC_007626.1"/>
</dbReference>
<dbReference type="SMR" id="Q2W8B4"/>
<dbReference type="STRING" id="342108.amb1107"/>
<dbReference type="KEGG" id="mag:amb1107"/>
<dbReference type="HOGENOM" id="CLU_000604_1_22_5"/>
<dbReference type="Proteomes" id="UP000007058">
    <property type="component" value="Chromosome"/>
</dbReference>
<dbReference type="GO" id="GO:0005886">
    <property type="term" value="C:plasma membrane"/>
    <property type="evidence" value="ECO:0007669"/>
    <property type="project" value="UniProtKB-SubCell"/>
</dbReference>
<dbReference type="GO" id="GO:0005524">
    <property type="term" value="F:ATP binding"/>
    <property type="evidence" value="ECO:0007669"/>
    <property type="project" value="UniProtKB-KW"/>
</dbReference>
<dbReference type="GO" id="GO:0016887">
    <property type="term" value="F:ATP hydrolysis activity"/>
    <property type="evidence" value="ECO:0007669"/>
    <property type="project" value="InterPro"/>
</dbReference>
<dbReference type="GO" id="GO:0015415">
    <property type="term" value="F:ATPase-coupled phosphate ion transmembrane transporter activity"/>
    <property type="evidence" value="ECO:0007669"/>
    <property type="project" value="UniProtKB-EC"/>
</dbReference>
<dbReference type="GO" id="GO:0035435">
    <property type="term" value="P:phosphate ion transmembrane transport"/>
    <property type="evidence" value="ECO:0007669"/>
    <property type="project" value="InterPro"/>
</dbReference>
<dbReference type="CDD" id="cd03260">
    <property type="entry name" value="ABC_PstB_phosphate_transporter"/>
    <property type="match status" value="1"/>
</dbReference>
<dbReference type="Gene3D" id="3.40.50.300">
    <property type="entry name" value="P-loop containing nucleotide triphosphate hydrolases"/>
    <property type="match status" value="1"/>
</dbReference>
<dbReference type="InterPro" id="IPR003593">
    <property type="entry name" value="AAA+_ATPase"/>
</dbReference>
<dbReference type="InterPro" id="IPR003439">
    <property type="entry name" value="ABC_transporter-like_ATP-bd"/>
</dbReference>
<dbReference type="InterPro" id="IPR017871">
    <property type="entry name" value="ABC_transporter-like_CS"/>
</dbReference>
<dbReference type="InterPro" id="IPR027417">
    <property type="entry name" value="P-loop_NTPase"/>
</dbReference>
<dbReference type="InterPro" id="IPR005670">
    <property type="entry name" value="PstB-like"/>
</dbReference>
<dbReference type="NCBIfam" id="TIGR00972">
    <property type="entry name" value="3a0107s01c2"/>
    <property type="match status" value="1"/>
</dbReference>
<dbReference type="PANTHER" id="PTHR43423">
    <property type="entry name" value="ABC TRANSPORTER I FAMILY MEMBER 17"/>
    <property type="match status" value="1"/>
</dbReference>
<dbReference type="PANTHER" id="PTHR43423:SF1">
    <property type="entry name" value="ABC TRANSPORTER I FAMILY MEMBER 17"/>
    <property type="match status" value="1"/>
</dbReference>
<dbReference type="Pfam" id="PF00005">
    <property type="entry name" value="ABC_tran"/>
    <property type="match status" value="1"/>
</dbReference>
<dbReference type="SMART" id="SM00382">
    <property type="entry name" value="AAA"/>
    <property type="match status" value="1"/>
</dbReference>
<dbReference type="SUPFAM" id="SSF52540">
    <property type="entry name" value="P-loop containing nucleoside triphosphate hydrolases"/>
    <property type="match status" value="1"/>
</dbReference>
<dbReference type="PROSITE" id="PS00211">
    <property type="entry name" value="ABC_TRANSPORTER_1"/>
    <property type="match status" value="1"/>
</dbReference>
<dbReference type="PROSITE" id="PS50893">
    <property type="entry name" value="ABC_TRANSPORTER_2"/>
    <property type="match status" value="1"/>
</dbReference>
<dbReference type="PROSITE" id="PS51238">
    <property type="entry name" value="PSTB"/>
    <property type="match status" value="1"/>
</dbReference>
<comment type="function">
    <text evidence="1">Part of the ABC transporter complex PstSACB involved in phosphate import. Responsible for energy coupling to the transport system.</text>
</comment>
<comment type="catalytic activity">
    <reaction evidence="1">
        <text>phosphate(out) + ATP + H2O = ADP + 2 phosphate(in) + H(+)</text>
        <dbReference type="Rhea" id="RHEA:24440"/>
        <dbReference type="ChEBI" id="CHEBI:15377"/>
        <dbReference type="ChEBI" id="CHEBI:15378"/>
        <dbReference type="ChEBI" id="CHEBI:30616"/>
        <dbReference type="ChEBI" id="CHEBI:43474"/>
        <dbReference type="ChEBI" id="CHEBI:456216"/>
        <dbReference type="EC" id="7.3.2.1"/>
    </reaction>
</comment>
<comment type="subunit">
    <text evidence="1">The complex is composed of two ATP-binding proteins (PstB), two transmembrane proteins (PstC and PstA) and a solute-binding protein (PstS).</text>
</comment>
<comment type="subcellular location">
    <subcellularLocation>
        <location evidence="1">Cell inner membrane</location>
        <topology evidence="1">Peripheral membrane protein</topology>
    </subcellularLocation>
</comment>
<comment type="similarity">
    <text evidence="1">Belongs to the ABC transporter superfamily. Phosphate importer (TC 3.A.1.7) family.</text>
</comment>
<accession>Q2W8B4</accession>
<sequence length="260" mass="28082">MAIIDSFVGSSKISARDLNVHYGEKQALFDVNLDIPVGQVTALIGPSGCGKSTFLRCINRMNDLVEIARVSGSLFLDGIDIQDAAMDVVQLRARVGMVFQRPNPFPKSIYENVAFGPRLHGLAAGADELDEIVISSLDKAGLWGEVKDRMGETGTSLSGGQQQRLCIARAIAVAPEVILMDEPCSALDPIATAAVEELIDELRGSYTIVIVTHSMQQAARVSQRTGFFHLGKLIEMGETESMFTSPQHPLTQGYITGRFG</sequence>